<organism>
    <name type="scientific">Desmonostoc muscorum</name>
    <name type="common">Nostoc muscorum</name>
    <dbReference type="NCBI Taxonomy" id="1179"/>
    <lineage>
        <taxon>Bacteria</taxon>
        <taxon>Bacillati</taxon>
        <taxon>Cyanobacteriota</taxon>
        <taxon>Cyanophyceae</taxon>
        <taxon>Nostocales</taxon>
        <taxon>Nostocaceae</taxon>
        <taxon>Desmonostoc</taxon>
    </lineage>
</organism>
<sequence length="99" mass="10878">MATVYKVTLVDQEGTETTIDVPDDEYILDIAEDQGLDLPYSCRAGACSTCAGKIVSGTVDQSDQSFLDDDQIEKGYVLTCVAYPTSDLKIETHKEEDLY</sequence>
<dbReference type="PIR" id="A00256">
    <property type="entry name" value="FENM1M"/>
</dbReference>
<dbReference type="SMR" id="P00252"/>
<dbReference type="GO" id="GO:0051537">
    <property type="term" value="F:2 iron, 2 sulfur cluster binding"/>
    <property type="evidence" value="ECO:0007669"/>
    <property type="project" value="UniProtKB-KW"/>
</dbReference>
<dbReference type="GO" id="GO:0009055">
    <property type="term" value="F:electron transfer activity"/>
    <property type="evidence" value="ECO:0007669"/>
    <property type="project" value="InterPro"/>
</dbReference>
<dbReference type="GO" id="GO:0046872">
    <property type="term" value="F:metal ion binding"/>
    <property type="evidence" value="ECO:0007669"/>
    <property type="project" value="UniProtKB-KW"/>
</dbReference>
<dbReference type="GO" id="GO:0022900">
    <property type="term" value="P:electron transport chain"/>
    <property type="evidence" value="ECO:0007669"/>
    <property type="project" value="InterPro"/>
</dbReference>
<dbReference type="CDD" id="cd00207">
    <property type="entry name" value="fer2"/>
    <property type="match status" value="1"/>
</dbReference>
<dbReference type="FunFam" id="3.10.20.30:FF:000014">
    <property type="entry name" value="Ferredoxin"/>
    <property type="match status" value="1"/>
</dbReference>
<dbReference type="Gene3D" id="3.10.20.30">
    <property type="match status" value="1"/>
</dbReference>
<dbReference type="InterPro" id="IPR036010">
    <property type="entry name" value="2Fe-2S_ferredoxin-like_sf"/>
</dbReference>
<dbReference type="InterPro" id="IPR001041">
    <property type="entry name" value="2Fe-2S_ferredoxin-type"/>
</dbReference>
<dbReference type="InterPro" id="IPR006058">
    <property type="entry name" value="2Fe2S_fd_BS"/>
</dbReference>
<dbReference type="InterPro" id="IPR012675">
    <property type="entry name" value="Beta-grasp_dom_sf"/>
</dbReference>
<dbReference type="InterPro" id="IPR010241">
    <property type="entry name" value="Fd_pln"/>
</dbReference>
<dbReference type="NCBIfam" id="TIGR02008">
    <property type="entry name" value="fdx_plant"/>
    <property type="match status" value="1"/>
</dbReference>
<dbReference type="PANTHER" id="PTHR43112">
    <property type="entry name" value="FERREDOXIN"/>
    <property type="match status" value="1"/>
</dbReference>
<dbReference type="PANTHER" id="PTHR43112:SF3">
    <property type="entry name" value="FERREDOXIN-2, CHLOROPLASTIC"/>
    <property type="match status" value="1"/>
</dbReference>
<dbReference type="Pfam" id="PF00111">
    <property type="entry name" value="Fer2"/>
    <property type="match status" value="1"/>
</dbReference>
<dbReference type="SUPFAM" id="SSF54292">
    <property type="entry name" value="2Fe-2S ferredoxin-like"/>
    <property type="match status" value="1"/>
</dbReference>
<dbReference type="PROSITE" id="PS00197">
    <property type="entry name" value="2FE2S_FER_1"/>
    <property type="match status" value="1"/>
</dbReference>
<dbReference type="PROSITE" id="PS51085">
    <property type="entry name" value="2FE2S_FER_2"/>
    <property type="match status" value="1"/>
</dbReference>
<reference key="1">
    <citation type="journal article" date="1982" name="J. Biochem.">
        <title>Amino acid sequences of Nostoc strain MAC ferredoxins I and II.</title>
        <authorList>
            <person name="Hase T."/>
            <person name="Matsubara H."/>
            <person name="Hutber G.N."/>
            <person name="Rogers L.J."/>
        </authorList>
    </citation>
    <scope>PROTEIN SEQUENCE OF 2-99</scope>
    <source>
        <strain>MAC</strain>
    </source>
</reference>
<evidence type="ECO:0000255" key="1">
    <source>
        <dbReference type="PROSITE-ProRule" id="PRU00465"/>
    </source>
</evidence>
<evidence type="ECO:0000269" key="2">
    <source>
    </source>
</evidence>
<evidence type="ECO:0000305" key="3"/>
<proteinExistence type="evidence at protein level"/>
<keyword id="KW-0001">2Fe-2S</keyword>
<keyword id="KW-0903">Direct protein sequencing</keyword>
<keyword id="KW-0249">Electron transport</keyword>
<keyword id="KW-0408">Iron</keyword>
<keyword id="KW-0411">Iron-sulfur</keyword>
<keyword id="KW-0479">Metal-binding</keyword>
<keyword id="KW-0813">Transport</keyword>
<accession>P00252</accession>
<name>FER1_DESMC</name>
<protein>
    <recommendedName>
        <fullName>Ferredoxin-1</fullName>
    </recommendedName>
    <alternativeName>
        <fullName>Ferredoxin I</fullName>
    </alternativeName>
</protein>
<feature type="initiator methionine" description="Removed" evidence="2">
    <location>
        <position position="1"/>
    </location>
</feature>
<feature type="chain" id="PRO_0000189343" description="Ferredoxin-1">
    <location>
        <begin position="2"/>
        <end position="99"/>
    </location>
</feature>
<feature type="domain" description="2Fe-2S ferredoxin-type" evidence="1">
    <location>
        <begin position="5"/>
        <end position="96"/>
    </location>
</feature>
<feature type="binding site">
    <location>
        <position position="42"/>
    </location>
    <ligand>
        <name>[2Fe-2S] cluster</name>
        <dbReference type="ChEBI" id="CHEBI:190135"/>
    </ligand>
</feature>
<feature type="binding site">
    <location>
        <position position="47"/>
    </location>
    <ligand>
        <name>[2Fe-2S] cluster</name>
        <dbReference type="ChEBI" id="CHEBI:190135"/>
    </ligand>
</feature>
<feature type="binding site">
    <location>
        <position position="50"/>
    </location>
    <ligand>
        <name>[2Fe-2S] cluster</name>
        <dbReference type="ChEBI" id="CHEBI:190135"/>
    </ligand>
</feature>
<feature type="binding site">
    <location>
        <position position="80"/>
    </location>
    <ligand>
        <name>[2Fe-2S] cluster</name>
        <dbReference type="ChEBI" id="CHEBI:190135"/>
    </ligand>
</feature>
<comment type="function">
    <text>Ferredoxins are iron-sulfur proteins that transfer electrons in a wide variety of metabolic reactions.</text>
</comment>
<comment type="cofactor">
    <cofactor>
        <name>[2Fe-2S] cluster</name>
        <dbReference type="ChEBI" id="CHEBI:190135"/>
    </cofactor>
    <text>Binds 1 [2Fe-2S] cluster.</text>
</comment>
<comment type="similarity">
    <text evidence="3">Belongs to the 2Fe2S plant-type ferredoxin family.</text>
</comment>